<dbReference type="EC" id="1.8.1.9" evidence="2"/>
<dbReference type="EMBL" id="L39923">
    <property type="protein sequence ID" value="AAB53131.1"/>
    <property type="molecule type" value="Genomic_DNA"/>
</dbReference>
<dbReference type="EMBL" id="X87899">
    <property type="protein sequence ID" value="CAA61150.1"/>
    <property type="molecule type" value="Genomic_DNA"/>
</dbReference>
<dbReference type="EMBL" id="AL583926">
    <property type="protein sequence ID" value="CAC32235.1"/>
    <property type="molecule type" value="Genomic_DNA"/>
</dbReference>
<dbReference type="PIR" id="S77662">
    <property type="entry name" value="S77662"/>
</dbReference>
<dbReference type="RefSeq" id="NP_302724.1">
    <property type="nucleotide sequence ID" value="NC_002677.1"/>
</dbReference>
<dbReference type="SMR" id="P46843"/>
<dbReference type="STRING" id="272631.gene:17576569"/>
<dbReference type="KEGG" id="mle:ML2703"/>
<dbReference type="PATRIC" id="fig|272631.5.peg.5206"/>
<dbReference type="Leproma" id="ML2703"/>
<dbReference type="eggNOG" id="COG0492">
    <property type="taxonomic scope" value="Bacteria"/>
</dbReference>
<dbReference type="eggNOG" id="COG3118">
    <property type="taxonomic scope" value="Bacteria"/>
</dbReference>
<dbReference type="HOGENOM" id="CLU_031864_5_1_11"/>
<dbReference type="OrthoDB" id="9806179at2"/>
<dbReference type="Proteomes" id="UP000000806">
    <property type="component" value="Chromosome"/>
</dbReference>
<dbReference type="GO" id="GO:0005737">
    <property type="term" value="C:cytoplasm"/>
    <property type="evidence" value="ECO:0007669"/>
    <property type="project" value="UniProtKB-SubCell"/>
</dbReference>
<dbReference type="GO" id="GO:0004791">
    <property type="term" value="F:thioredoxin-disulfide reductase (NADPH) activity"/>
    <property type="evidence" value="ECO:0007669"/>
    <property type="project" value="UniProtKB-EC"/>
</dbReference>
<dbReference type="GO" id="GO:0019430">
    <property type="term" value="P:removal of superoxide radicals"/>
    <property type="evidence" value="ECO:0007669"/>
    <property type="project" value="InterPro"/>
</dbReference>
<dbReference type="CDD" id="cd02947">
    <property type="entry name" value="TRX_family"/>
    <property type="match status" value="1"/>
</dbReference>
<dbReference type="FunFam" id="3.40.30.10:FF:000001">
    <property type="entry name" value="Thioredoxin"/>
    <property type="match status" value="1"/>
</dbReference>
<dbReference type="Gene3D" id="3.50.50.60">
    <property type="entry name" value="FAD/NAD(P)-binding domain"/>
    <property type="match status" value="2"/>
</dbReference>
<dbReference type="Gene3D" id="3.40.30.10">
    <property type="entry name" value="Glutaredoxin"/>
    <property type="match status" value="1"/>
</dbReference>
<dbReference type="InterPro" id="IPR036188">
    <property type="entry name" value="FAD/NAD-bd_sf"/>
</dbReference>
<dbReference type="InterPro" id="IPR023753">
    <property type="entry name" value="FAD/NAD-binding_dom"/>
</dbReference>
<dbReference type="InterPro" id="IPR050097">
    <property type="entry name" value="Ferredoxin-NADP_redctase_2"/>
</dbReference>
<dbReference type="InterPro" id="IPR008255">
    <property type="entry name" value="Pyr_nucl-diS_OxRdtase_2_AS"/>
</dbReference>
<dbReference type="InterPro" id="IPR005982">
    <property type="entry name" value="Thioredox_Rdtase"/>
</dbReference>
<dbReference type="InterPro" id="IPR005746">
    <property type="entry name" value="Thioredoxin"/>
</dbReference>
<dbReference type="InterPro" id="IPR036249">
    <property type="entry name" value="Thioredoxin-like_sf"/>
</dbReference>
<dbReference type="InterPro" id="IPR017937">
    <property type="entry name" value="Thioredoxin_CS"/>
</dbReference>
<dbReference type="InterPro" id="IPR013766">
    <property type="entry name" value="Thioredoxin_domain"/>
</dbReference>
<dbReference type="NCBIfam" id="TIGR01068">
    <property type="entry name" value="thioredoxin"/>
    <property type="match status" value="1"/>
</dbReference>
<dbReference type="NCBIfam" id="TIGR01292">
    <property type="entry name" value="TRX_reduct"/>
    <property type="match status" value="1"/>
</dbReference>
<dbReference type="PANTHER" id="PTHR48105">
    <property type="entry name" value="THIOREDOXIN REDUCTASE 1-RELATED-RELATED"/>
    <property type="match status" value="1"/>
</dbReference>
<dbReference type="Pfam" id="PF07992">
    <property type="entry name" value="Pyr_redox_2"/>
    <property type="match status" value="1"/>
</dbReference>
<dbReference type="Pfam" id="PF00085">
    <property type="entry name" value="Thioredoxin"/>
    <property type="match status" value="1"/>
</dbReference>
<dbReference type="PRINTS" id="PR00368">
    <property type="entry name" value="FADPNR"/>
</dbReference>
<dbReference type="PRINTS" id="PR00469">
    <property type="entry name" value="PNDRDTASEII"/>
</dbReference>
<dbReference type="SUPFAM" id="SSF51905">
    <property type="entry name" value="FAD/NAD(P)-binding domain"/>
    <property type="match status" value="1"/>
</dbReference>
<dbReference type="SUPFAM" id="SSF52833">
    <property type="entry name" value="Thioredoxin-like"/>
    <property type="match status" value="1"/>
</dbReference>
<dbReference type="PROSITE" id="PS00573">
    <property type="entry name" value="PYRIDINE_REDOX_2"/>
    <property type="match status" value="1"/>
</dbReference>
<dbReference type="PROSITE" id="PS00194">
    <property type="entry name" value="THIOREDOXIN_1"/>
    <property type="match status" value="1"/>
</dbReference>
<dbReference type="PROSITE" id="PS51352">
    <property type="entry name" value="THIOREDOXIN_2"/>
    <property type="match status" value="1"/>
</dbReference>
<accession>P46843</accession>
<proteinExistence type="inferred from homology"/>
<name>TRXB_MYCLE</name>
<gene>
    <name type="primary">trxB/A</name>
    <name type="synonym">trx</name>
    <name type="ordered locus">ML2703</name>
</gene>
<reference key="1">
    <citation type="journal article" date="1996" name="Microbiology">
        <title>Gene arrangement and organization in an approximately 76 kb fragment encompassing the oriC region of the chromosome of Mycobacterium leprae.</title>
        <authorList>
            <person name="Fsihi H."/>
            <person name="de Rossi E."/>
            <person name="Salazar L."/>
            <person name="Cantoni R."/>
            <person name="Labo M."/>
            <person name="Riccardi G."/>
            <person name="Takiff H.E."/>
            <person name="Eiglmeier K."/>
            <person name="Bergh S."/>
            <person name="Cole S.T."/>
        </authorList>
    </citation>
    <scope>NUCLEOTIDE SEQUENCE [GENOMIC DNA]</scope>
</reference>
<reference key="2">
    <citation type="journal article" date="1995" name="Mol. Microbiol.">
        <title>Unique gene organization of thioredoxin and thioredoxin reductase in Mycobacterium leprae.</title>
        <authorList>
            <person name="Wieles B."/>
            <person name="van Soolingen D."/>
            <person name="Holmgren A."/>
            <person name="Offringa R."/>
            <person name="Ottenhoff T."/>
            <person name="Thole J."/>
        </authorList>
    </citation>
    <scope>NUCLEOTIDE SEQUENCE [GENOMIC DNA]</scope>
</reference>
<reference key="3">
    <citation type="journal article" date="2001" name="Nature">
        <title>Massive gene decay in the leprosy bacillus.</title>
        <authorList>
            <person name="Cole S.T."/>
            <person name="Eiglmeier K."/>
            <person name="Parkhill J."/>
            <person name="James K.D."/>
            <person name="Thomson N.R."/>
            <person name="Wheeler P.R."/>
            <person name="Honore N."/>
            <person name="Garnier T."/>
            <person name="Churcher C.M."/>
            <person name="Harris D.E."/>
            <person name="Mungall K.L."/>
            <person name="Basham D."/>
            <person name="Brown D."/>
            <person name="Chillingworth T."/>
            <person name="Connor R."/>
            <person name="Davies R.M."/>
            <person name="Devlin K."/>
            <person name="Duthoy S."/>
            <person name="Feltwell T."/>
            <person name="Fraser A."/>
            <person name="Hamlin N."/>
            <person name="Holroyd S."/>
            <person name="Hornsby T."/>
            <person name="Jagels K."/>
            <person name="Lacroix C."/>
            <person name="Maclean J."/>
            <person name="Moule S."/>
            <person name="Murphy L.D."/>
            <person name="Oliver K."/>
            <person name="Quail M.A."/>
            <person name="Rajandream M.A."/>
            <person name="Rutherford K.M."/>
            <person name="Rutter S."/>
            <person name="Seeger K."/>
            <person name="Simon S."/>
            <person name="Simmonds M."/>
            <person name="Skelton J."/>
            <person name="Squares R."/>
            <person name="Squares S."/>
            <person name="Stevens K."/>
            <person name="Taylor K."/>
            <person name="Whitehead S."/>
            <person name="Woodward J.R."/>
            <person name="Barrell B.G."/>
        </authorList>
    </citation>
    <scope>NUCLEOTIDE SEQUENCE [LARGE SCALE GENOMIC DNA]</scope>
    <source>
        <strain>TN</strain>
    </source>
</reference>
<comment type="catalytic activity">
    <reaction evidence="2">
        <text>[thioredoxin]-dithiol + NADP(+) = [thioredoxin]-disulfide + NADPH + H(+)</text>
        <dbReference type="Rhea" id="RHEA:20345"/>
        <dbReference type="Rhea" id="RHEA-COMP:10698"/>
        <dbReference type="Rhea" id="RHEA-COMP:10700"/>
        <dbReference type="ChEBI" id="CHEBI:15378"/>
        <dbReference type="ChEBI" id="CHEBI:29950"/>
        <dbReference type="ChEBI" id="CHEBI:50058"/>
        <dbReference type="ChEBI" id="CHEBI:57783"/>
        <dbReference type="ChEBI" id="CHEBI:58349"/>
        <dbReference type="EC" id="1.8.1.9"/>
    </reaction>
</comment>
<comment type="cofactor">
    <cofactor evidence="2">
        <name>FAD</name>
        <dbReference type="ChEBI" id="CHEBI:57692"/>
    </cofactor>
    <text evidence="2">Binds 1 FAD per subunit.</text>
</comment>
<comment type="subunit">
    <text evidence="2">Homodimer.</text>
</comment>
<comment type="subcellular location">
    <subcellularLocation>
        <location evidence="1">Cytoplasm</location>
    </subcellularLocation>
</comment>
<comment type="miscellaneous">
    <text evidence="5">In the pathogen M.leprae, thioredoxin reductase (TR) and thioredoxin (Trx) are encoded by a single gene. N-terminal part of the protein corresponds to TR and the C-terminal part to Trx.</text>
</comment>
<comment type="miscellaneous">
    <text evidence="2">The active site is a redox-active disulfide bond.</text>
</comment>
<comment type="similarity">
    <text evidence="4">In the N-terminal section; belongs to the class-II pyridine nucleotide-disulfide oxidoreductase family.</text>
</comment>
<protein>
    <recommendedName>
        <fullName>Bifunctional thioredoxin reductase/thioredoxin</fullName>
    </recommendedName>
    <domain>
        <recommendedName>
            <fullName>Thioredoxin reductase</fullName>
            <shortName>TRXR</shortName>
            <ecNumber evidence="2">1.8.1.9</ecNumber>
        </recommendedName>
    </domain>
    <domain>
        <recommendedName>
            <fullName>Thioredoxin</fullName>
        </recommendedName>
    </domain>
</protein>
<evidence type="ECO:0000250" key="1"/>
<evidence type="ECO:0000250" key="2">
    <source>
        <dbReference type="UniProtKB" id="P9WHH1"/>
    </source>
</evidence>
<evidence type="ECO:0000255" key="3">
    <source>
        <dbReference type="PROSITE-ProRule" id="PRU00691"/>
    </source>
</evidence>
<evidence type="ECO:0000305" key="4"/>
<evidence type="ECO:0000305" key="5">
    <source>
    </source>
</evidence>
<sequence>MNTTPSAHETIHEVIVIGSGPAGYTAALYAARAQLTPLVFEGTSFGGALMTTTEVENYPGFRNGITGPELMDDMREQALRFGAELRTEDVESVSLRGPIKSVVTAEGQTYQARAVILAMGTSVRYLQIPGEQELLGRGVSACATCDGSFFRGQDIAVIGGGDSAMEEALFLTRFARSVTLVHRRDEFRASKIMLGRARNNDKIKFITNHTVVAVNGYTTVTGLRLRNTTTGEETTLVVTGVFVAIGHEPRSSLVSDVVDIDPDGYVLVKGRTTSTSMDGVFAAGDLVDRTYRQAITAAGSGCAAAIDAERWLAEHAGSKANETTEETGDVDSTDTTDWSTAMTDAKNAGVTIEVTDASFFADVLSSNKPVLVDFWATWCGPCKMVAPVLEEIASEQRNQLTVAKLDVDTNPEMAREFQVVSIPTMILFQGGQPVKRIVGAKGKAALLRDLSDVVPNLN</sequence>
<keyword id="KW-0963">Cytoplasm</keyword>
<keyword id="KW-1015">Disulfide bond</keyword>
<keyword id="KW-0249">Electron transport</keyword>
<keyword id="KW-0274">FAD</keyword>
<keyword id="KW-0285">Flavoprotein</keyword>
<keyword id="KW-0521">NADP</keyword>
<keyword id="KW-0560">Oxidoreductase</keyword>
<keyword id="KW-0676">Redox-active center</keyword>
<keyword id="KW-1185">Reference proteome</keyword>
<keyword id="KW-0813">Transport</keyword>
<feature type="chain" id="PRO_0000166758" description="Bifunctional thioredoxin reductase/thioredoxin">
    <location>
        <begin position="1"/>
        <end position="458"/>
    </location>
</feature>
<feature type="domain" description="Thioredoxin" evidence="3">
    <location>
        <begin position="341"/>
        <end position="455"/>
    </location>
</feature>
<feature type="region of interest" description="Thioredoxin reductase">
    <location>
        <begin position="1"/>
        <end position="321"/>
    </location>
</feature>
<feature type="region of interest" description="Linker">
    <location>
        <begin position="322"/>
        <end position="347"/>
    </location>
</feature>
<feature type="binding site" evidence="2">
    <location>
        <begin position="19"/>
        <end position="22"/>
    </location>
    <ligand>
        <name>FAD</name>
        <dbReference type="ChEBI" id="CHEBI:57692"/>
    </ligand>
</feature>
<feature type="binding site" evidence="2">
    <location>
        <begin position="41"/>
        <end position="48"/>
    </location>
    <ligand>
        <name>FAD</name>
        <dbReference type="ChEBI" id="CHEBI:57692"/>
    </ligand>
</feature>
<feature type="binding site" evidence="2">
    <location>
        <position position="57"/>
    </location>
    <ligand>
        <name>FAD</name>
        <dbReference type="ChEBI" id="CHEBI:57692"/>
    </ligand>
</feature>
<feature type="binding site" evidence="2">
    <location>
        <position position="90"/>
    </location>
    <ligand>
        <name>FAD</name>
        <dbReference type="ChEBI" id="CHEBI:57692"/>
    </ligand>
</feature>
<feature type="binding site" evidence="2">
    <location>
        <position position="163"/>
    </location>
    <ligand>
        <name>NADP(+)</name>
        <dbReference type="ChEBI" id="CHEBI:58349"/>
    </ligand>
</feature>
<feature type="binding site" evidence="2">
    <location>
        <position position="182"/>
    </location>
    <ligand>
        <name>NADP(+)</name>
        <dbReference type="ChEBI" id="CHEBI:58349"/>
    </ligand>
</feature>
<feature type="binding site" evidence="2">
    <location>
        <position position="188"/>
    </location>
    <ligand>
        <name>NADP(+)</name>
        <dbReference type="ChEBI" id="CHEBI:58349"/>
    </ligand>
</feature>
<feature type="binding site" evidence="2">
    <location>
        <position position="245"/>
    </location>
    <ligand>
        <name>NADP(+)</name>
        <dbReference type="ChEBI" id="CHEBI:58349"/>
    </ligand>
</feature>
<feature type="binding site" evidence="2">
    <location>
        <position position="265"/>
    </location>
    <ligand>
        <name>NADP(+)</name>
        <dbReference type="ChEBI" id="CHEBI:58349"/>
    </ligand>
</feature>
<feature type="binding site" evidence="2">
    <location>
        <position position="285"/>
    </location>
    <ligand>
        <name>FAD</name>
        <dbReference type="ChEBI" id="CHEBI:57692"/>
    </ligand>
</feature>
<feature type="binding site" evidence="2">
    <location>
        <begin position="292"/>
        <end position="295"/>
    </location>
    <ligand>
        <name>FAD</name>
        <dbReference type="ChEBI" id="CHEBI:57692"/>
    </ligand>
</feature>
<feature type="binding site" evidence="2">
    <location>
        <position position="292"/>
    </location>
    <ligand>
        <name>NADP(+)</name>
        <dbReference type="ChEBI" id="CHEBI:58349"/>
    </ligand>
</feature>
<feature type="disulfide bond" description="Redox-active" evidence="3">
    <location>
        <begin position="142"/>
        <end position="145"/>
    </location>
</feature>
<feature type="disulfide bond" description="Redox-active" evidence="3">
    <location>
        <begin position="379"/>
        <end position="382"/>
    </location>
</feature>
<organism>
    <name type="scientific">Mycobacterium leprae (strain TN)</name>
    <dbReference type="NCBI Taxonomy" id="272631"/>
    <lineage>
        <taxon>Bacteria</taxon>
        <taxon>Bacillati</taxon>
        <taxon>Actinomycetota</taxon>
        <taxon>Actinomycetes</taxon>
        <taxon>Mycobacteriales</taxon>
        <taxon>Mycobacteriaceae</taxon>
        <taxon>Mycobacterium</taxon>
    </lineage>
</organism>